<keyword id="KW-0012">Acyltransferase</keyword>
<keyword id="KW-0028">Amino-acid biosynthesis</keyword>
<keyword id="KW-0963">Cytoplasm</keyword>
<keyword id="KW-0486">Methionine biosynthesis</keyword>
<keyword id="KW-0808">Transferase</keyword>
<dbReference type="EC" id="2.3.1.31" evidence="1 3"/>
<dbReference type="EMBL" id="AOLJ01000012">
    <property type="protein sequence ID" value="ELZ81989.1"/>
    <property type="molecule type" value="Genomic_DNA"/>
</dbReference>
<dbReference type="SMR" id="M0HG00"/>
<dbReference type="ESTHER" id="halvd-metxa">
    <property type="family name" value="Homoserine_transacetylase"/>
</dbReference>
<dbReference type="PATRIC" id="fig|1227459.3.peg.1470"/>
<dbReference type="UniPathway" id="UPA00051">
    <property type="reaction ID" value="UER00074"/>
</dbReference>
<dbReference type="Proteomes" id="UP000011571">
    <property type="component" value="Unassembled WGS sequence"/>
</dbReference>
<dbReference type="GO" id="GO:0005737">
    <property type="term" value="C:cytoplasm"/>
    <property type="evidence" value="ECO:0007669"/>
    <property type="project" value="UniProtKB-SubCell"/>
</dbReference>
<dbReference type="GO" id="GO:0004414">
    <property type="term" value="F:homoserine O-acetyltransferase activity"/>
    <property type="evidence" value="ECO:0007669"/>
    <property type="project" value="UniProtKB-UniRule"/>
</dbReference>
<dbReference type="GO" id="GO:0009092">
    <property type="term" value="P:homoserine metabolic process"/>
    <property type="evidence" value="ECO:0007669"/>
    <property type="project" value="TreeGrafter"/>
</dbReference>
<dbReference type="GO" id="GO:0009086">
    <property type="term" value="P:methionine biosynthetic process"/>
    <property type="evidence" value="ECO:0007669"/>
    <property type="project" value="UniProtKB-UniRule"/>
</dbReference>
<dbReference type="Gene3D" id="3.40.50.1820">
    <property type="entry name" value="alpha/beta hydrolase"/>
    <property type="match status" value="1"/>
</dbReference>
<dbReference type="HAMAP" id="MF_00296">
    <property type="entry name" value="MetX_acyltransf"/>
    <property type="match status" value="1"/>
</dbReference>
<dbReference type="InterPro" id="IPR000073">
    <property type="entry name" value="AB_hydrolase_1"/>
</dbReference>
<dbReference type="InterPro" id="IPR029058">
    <property type="entry name" value="AB_hydrolase_fold"/>
</dbReference>
<dbReference type="InterPro" id="IPR008220">
    <property type="entry name" value="HAT_MetX-like"/>
</dbReference>
<dbReference type="NCBIfam" id="TIGR01392">
    <property type="entry name" value="homoserO_Ac_trn"/>
    <property type="match status" value="1"/>
</dbReference>
<dbReference type="NCBIfam" id="NF001209">
    <property type="entry name" value="PRK00175.1"/>
    <property type="match status" value="1"/>
</dbReference>
<dbReference type="PANTHER" id="PTHR32268">
    <property type="entry name" value="HOMOSERINE O-ACETYLTRANSFERASE"/>
    <property type="match status" value="1"/>
</dbReference>
<dbReference type="PANTHER" id="PTHR32268:SF11">
    <property type="entry name" value="HOMOSERINE O-ACETYLTRANSFERASE"/>
    <property type="match status" value="1"/>
</dbReference>
<dbReference type="Pfam" id="PF00561">
    <property type="entry name" value="Abhydrolase_1"/>
    <property type="match status" value="1"/>
</dbReference>
<dbReference type="PIRSF" id="PIRSF000443">
    <property type="entry name" value="Homoser_Ac_trans"/>
    <property type="match status" value="1"/>
</dbReference>
<dbReference type="SUPFAM" id="SSF53474">
    <property type="entry name" value="alpha/beta-Hydrolases"/>
    <property type="match status" value="1"/>
</dbReference>
<reference key="1">
    <citation type="journal article" date="2014" name="PLoS Genet.">
        <title>Phylogenetically driven sequencing of extremely halophilic archaea reveals strategies for static and dynamic osmo-response.</title>
        <authorList>
            <person name="Becker E.A."/>
            <person name="Seitzer P.M."/>
            <person name="Tritt A."/>
            <person name="Larsen D."/>
            <person name="Krusor M."/>
            <person name="Yao A.I."/>
            <person name="Wu D."/>
            <person name="Madern D."/>
            <person name="Eisen J.A."/>
            <person name="Darling A.E."/>
            <person name="Facciotti M.T."/>
        </authorList>
    </citation>
    <scope>NUCLEOTIDE SEQUENCE [LARGE SCALE GENOMIC DNA]</scope>
    <source>
        <strain>ATCC 33959 / DSM 4427 / JCM 8863 / NBRC 102184 / NCIMB 2188 / Ma 2.38</strain>
    </source>
</reference>
<reference key="2">
    <citation type="journal article" date="2017" name="Nat. Chem. Biol.">
        <title>Parallel evolution of non-homologous isofunctional enzymes in methionine biosynthesis.</title>
        <authorList>
            <person name="Bastard K."/>
            <person name="Perret A."/>
            <person name="Mariage A."/>
            <person name="Bessonnet T."/>
            <person name="Pinet-Turpault A."/>
            <person name="Petit J.L."/>
            <person name="Darii E."/>
            <person name="Bazire P."/>
            <person name="Vergne-Vaxelaire C."/>
            <person name="Brewee C."/>
            <person name="Debard A."/>
            <person name="Pellouin V."/>
            <person name="Besnard-Gonnet M."/>
            <person name="Artiguenave F."/>
            <person name="Medigue C."/>
            <person name="Vallenet D."/>
            <person name="Danchin A."/>
            <person name="Zaparucha A."/>
            <person name="Weissenbach J."/>
            <person name="Salanoubat M."/>
            <person name="de Berardinis V."/>
        </authorList>
    </citation>
    <scope>FUNCTION</scope>
    <scope>CATALYTIC ACTIVITY</scope>
</reference>
<name>METXA_HALGM</name>
<accession>M0HG00</accession>
<sequence length="415" mass="44773">MSRTRTTPGRRVESDVVDIGEHEFESGEILPDLQVAYEAYGEFDGQNAVLVCHGLTGSQHVAGHGTESGVSGQARAWWGDIVGPGKALDTNDYYVICVNVPGSCYGTSGPASEGPDGEPWGTDFPPVTVHDWTRAQRRLLDHLGVGRLHAVVGGSVGGMNALDWAVQFPDDVERLAVVASAARLDSQCLGIDAVARRAITSDPNWNGGDYYGEDRASPDAGLGLARQLGHLMYLSKDSMERKFGRRSAGRGDRGDAFPSDPAAAFFPYREVESYLDYQAEKFAERFDANSYLYLTRAMDDFDLSEGYESDAAALAAFEGESLLVSFTGDWHFTTEQSESLAGAFRRVDAPVAHHVVESDHGHDAFLVEPEKVGPPLGDFVDEGVAGRAVTDTATDGGEPDEEKDFAPVHSSLFSR</sequence>
<comment type="function">
    <text evidence="1 3">Transfers an acetyl group from acetyl-CoA to L-homoserine, forming acetyl-L-homoserine.</text>
</comment>
<comment type="catalytic activity">
    <reaction evidence="1 3">
        <text>L-homoserine + acetyl-CoA = O-acetyl-L-homoserine + CoA</text>
        <dbReference type="Rhea" id="RHEA:13701"/>
        <dbReference type="ChEBI" id="CHEBI:57287"/>
        <dbReference type="ChEBI" id="CHEBI:57288"/>
        <dbReference type="ChEBI" id="CHEBI:57476"/>
        <dbReference type="ChEBI" id="CHEBI:57716"/>
        <dbReference type="EC" id="2.3.1.31"/>
    </reaction>
</comment>
<comment type="pathway">
    <text evidence="1">Amino-acid biosynthesis; L-methionine biosynthesis via de novo pathway; O-acetyl-L-homoserine from L-homoserine: step 1/1.</text>
</comment>
<comment type="subunit">
    <text evidence="1">Homodimer.</text>
</comment>
<comment type="subcellular location">
    <subcellularLocation>
        <location evidence="1">Cytoplasm</location>
    </subcellularLocation>
</comment>
<comment type="similarity">
    <text evidence="1">Belongs to the AB hydrolase superfamily. MetX family.</text>
</comment>
<protein>
    <recommendedName>
        <fullName evidence="1">Homoserine O-acetyltransferase</fullName>
        <shortName evidence="1 4">HAT</shortName>
        <ecNumber evidence="1 3">2.3.1.31</ecNumber>
    </recommendedName>
    <alternativeName>
        <fullName evidence="1">Homoserine transacetylase</fullName>
        <shortName evidence="1">HTA</shortName>
    </alternativeName>
</protein>
<feature type="chain" id="PRO_0000440281" description="Homoserine O-acetyltransferase">
    <location>
        <begin position="1"/>
        <end position="415"/>
    </location>
</feature>
<feature type="domain" description="AB hydrolase-1" evidence="1">
    <location>
        <begin position="47"/>
        <end position="369"/>
    </location>
</feature>
<feature type="region of interest" description="Disordered" evidence="2">
    <location>
        <begin position="387"/>
        <end position="415"/>
    </location>
</feature>
<feature type="active site" description="Nucleophile" evidence="1">
    <location>
        <position position="155"/>
    </location>
</feature>
<feature type="active site" evidence="1">
    <location>
        <position position="329"/>
    </location>
</feature>
<feature type="active site" evidence="1">
    <location>
        <position position="362"/>
    </location>
</feature>
<feature type="binding site" evidence="1">
    <location>
        <position position="226"/>
    </location>
    <ligand>
        <name>substrate</name>
    </ligand>
</feature>
<feature type="binding site" evidence="1">
    <location>
        <position position="363"/>
    </location>
    <ligand>
        <name>substrate</name>
    </ligand>
</feature>
<evidence type="ECO:0000255" key="1">
    <source>
        <dbReference type="HAMAP-Rule" id="MF_00296"/>
    </source>
</evidence>
<evidence type="ECO:0000256" key="2">
    <source>
        <dbReference type="SAM" id="MobiDB-lite"/>
    </source>
</evidence>
<evidence type="ECO:0000269" key="3">
    <source>
    </source>
</evidence>
<evidence type="ECO:0000303" key="4">
    <source>
    </source>
</evidence>
<evidence type="ECO:0000312" key="5">
    <source>
        <dbReference type="EMBL" id="ELZ81989.1"/>
    </source>
</evidence>
<gene>
    <name evidence="1 4" type="primary">metXA</name>
    <name evidence="5" type="ORF">C454_07598</name>
</gene>
<organism>
    <name type="scientific">Haloferax gibbonsii (strain ATCC 33959 / DSM 4427 / JCM 8863 / NBRC 102184 / NCIMB 2188 / Ma 2.38)</name>
    <dbReference type="NCBI Taxonomy" id="1227459"/>
    <lineage>
        <taxon>Archaea</taxon>
        <taxon>Methanobacteriati</taxon>
        <taxon>Methanobacteriota</taxon>
        <taxon>Stenosarchaea group</taxon>
        <taxon>Halobacteria</taxon>
        <taxon>Halobacteriales</taxon>
        <taxon>Haloferacaceae</taxon>
        <taxon>Haloferax</taxon>
    </lineage>
</organism>
<proteinExistence type="evidence at protein level"/>